<gene>
    <name type="ordered locus">YGL102C</name>
</gene>
<feature type="chain" id="PRO_0000202753" description="Putative uncharacterized protein YGL102C">
    <location>
        <begin position="1"/>
        <end position="142"/>
    </location>
</feature>
<protein>
    <recommendedName>
        <fullName>Putative uncharacterized protein YGL102C</fullName>
    </recommendedName>
</protein>
<sequence length="142" mass="16175">MRLSDQFNNTTSSSDFFFSQLGDESSFDDNWNIWNSTLTQDLTVTGCQSVNNWSSFLRSRFQVLVSLVFWDQCPQFVQVQDWLPEMSLLLVEVSHTNLTEITWMVFIHVNSVVMLTTGHTSTTGVLSVLTDTTFTGCTKKIL</sequence>
<name>YGK2_YEAST</name>
<organism>
    <name type="scientific">Saccharomyces cerevisiae (strain ATCC 204508 / S288c)</name>
    <name type="common">Baker's yeast</name>
    <dbReference type="NCBI Taxonomy" id="559292"/>
    <lineage>
        <taxon>Eukaryota</taxon>
        <taxon>Fungi</taxon>
        <taxon>Dikarya</taxon>
        <taxon>Ascomycota</taxon>
        <taxon>Saccharomycotina</taxon>
        <taxon>Saccharomycetes</taxon>
        <taxon>Saccharomycetales</taxon>
        <taxon>Saccharomycetaceae</taxon>
        <taxon>Saccharomyces</taxon>
    </lineage>
</organism>
<accession>P53143</accession>
<comment type="miscellaneous">
    <text evidence="1">Completely overlaps RPL28.</text>
</comment>
<comment type="caution">
    <text evidence="2">Product of a dubious gene prediction unlikely to encode a functional protein. Because of that it is not part of the S.cerevisiae S288c complete/reference proteome set.</text>
</comment>
<reference key="1">
    <citation type="journal article" date="1997" name="Yeast">
        <title>Sequence analysis of 203 kilobases from Saccharomyces cerevisiae chromosome VII.</title>
        <authorList>
            <person name="Rieger M."/>
            <person name="Brueckner M."/>
            <person name="Schaefer M."/>
            <person name="Mueller-Auer S."/>
        </authorList>
    </citation>
    <scope>NUCLEOTIDE SEQUENCE [GENOMIC DNA]</scope>
    <source>
        <strain>ATCC 204508 / S288c</strain>
    </source>
</reference>
<reference key="2">
    <citation type="journal article" date="1997" name="Nature">
        <title>The nucleotide sequence of Saccharomyces cerevisiae chromosome VII.</title>
        <authorList>
            <person name="Tettelin H."/>
            <person name="Agostoni-Carbone M.L."/>
            <person name="Albermann K."/>
            <person name="Albers M."/>
            <person name="Arroyo J."/>
            <person name="Backes U."/>
            <person name="Barreiros T."/>
            <person name="Bertani I."/>
            <person name="Bjourson A.J."/>
            <person name="Brueckner M."/>
            <person name="Bruschi C.V."/>
            <person name="Carignani G."/>
            <person name="Castagnoli L."/>
            <person name="Cerdan E."/>
            <person name="Clemente M.L."/>
            <person name="Coblenz A."/>
            <person name="Coglievina M."/>
            <person name="Coissac E."/>
            <person name="Defoor E."/>
            <person name="Del Bino S."/>
            <person name="Delius H."/>
            <person name="Delneri D."/>
            <person name="de Wergifosse P."/>
            <person name="Dujon B."/>
            <person name="Durand P."/>
            <person name="Entian K.-D."/>
            <person name="Eraso P."/>
            <person name="Escribano V."/>
            <person name="Fabiani L."/>
            <person name="Fartmann B."/>
            <person name="Feroli F."/>
            <person name="Feuermann M."/>
            <person name="Frontali L."/>
            <person name="Garcia-Gonzalez M."/>
            <person name="Garcia-Saez M.I."/>
            <person name="Goffeau A."/>
            <person name="Guerreiro P."/>
            <person name="Hani J."/>
            <person name="Hansen M."/>
            <person name="Hebling U."/>
            <person name="Hernandez K."/>
            <person name="Heumann K."/>
            <person name="Hilger F."/>
            <person name="Hofmann B."/>
            <person name="Indge K.J."/>
            <person name="James C.M."/>
            <person name="Klima R."/>
            <person name="Koetter P."/>
            <person name="Kramer B."/>
            <person name="Kramer W."/>
            <person name="Lauquin G."/>
            <person name="Leuther H."/>
            <person name="Louis E.J."/>
            <person name="Maillier E."/>
            <person name="Marconi A."/>
            <person name="Martegani E."/>
            <person name="Mazon M.J."/>
            <person name="Mazzoni C."/>
            <person name="McReynolds A.D.K."/>
            <person name="Melchioretto P."/>
            <person name="Mewes H.-W."/>
            <person name="Minenkova O."/>
            <person name="Mueller-Auer S."/>
            <person name="Nawrocki A."/>
            <person name="Netter P."/>
            <person name="Neu R."/>
            <person name="Nombela C."/>
            <person name="Oliver S.G."/>
            <person name="Panzeri L."/>
            <person name="Paoluzi S."/>
            <person name="Plevani P."/>
            <person name="Portetelle D."/>
            <person name="Portillo F."/>
            <person name="Potier S."/>
            <person name="Purnelle B."/>
            <person name="Rieger M."/>
            <person name="Riles L."/>
            <person name="Rinaldi T."/>
            <person name="Robben J."/>
            <person name="Rodrigues-Pousada C."/>
            <person name="Rodriguez-Belmonte E."/>
            <person name="Rodriguez-Torres A.M."/>
            <person name="Rose M."/>
            <person name="Ruzzi M."/>
            <person name="Saliola M."/>
            <person name="Sanchez-Perez M."/>
            <person name="Schaefer B."/>
            <person name="Schaefer M."/>
            <person name="Scharfe M."/>
            <person name="Schmidheini T."/>
            <person name="Schreer A."/>
            <person name="Skala J."/>
            <person name="Souciet J.-L."/>
            <person name="Steensma H.Y."/>
            <person name="Talla E."/>
            <person name="Thierry A."/>
            <person name="Vandenbol M."/>
            <person name="van der Aart Q.J.M."/>
            <person name="Van Dyck L."/>
            <person name="Vanoni M."/>
            <person name="Verhasselt P."/>
            <person name="Voet M."/>
            <person name="Volckaert G."/>
            <person name="Wambutt R."/>
            <person name="Watson M.D."/>
            <person name="Weber N."/>
            <person name="Wedler E."/>
            <person name="Wedler H."/>
            <person name="Wipfli P."/>
            <person name="Wolf K."/>
            <person name="Wright L.F."/>
            <person name="Zaccaria P."/>
            <person name="Zimmermann M."/>
            <person name="Zollner A."/>
            <person name="Kleine K."/>
        </authorList>
    </citation>
    <scope>NUCLEOTIDE SEQUENCE [LARGE SCALE GENOMIC DNA]</scope>
    <source>
        <strain>ATCC 204508 / S288c</strain>
    </source>
</reference>
<reference key="3">
    <citation type="journal article" date="2014" name="G3 (Bethesda)">
        <title>The reference genome sequence of Saccharomyces cerevisiae: Then and now.</title>
        <authorList>
            <person name="Engel S.R."/>
            <person name="Dietrich F.S."/>
            <person name="Fisk D.G."/>
            <person name="Binkley G."/>
            <person name="Balakrishnan R."/>
            <person name="Costanzo M.C."/>
            <person name="Dwight S.S."/>
            <person name="Hitz B.C."/>
            <person name="Karra K."/>
            <person name="Nash R.S."/>
            <person name="Weng S."/>
            <person name="Wong E.D."/>
            <person name="Lloyd P."/>
            <person name="Skrzypek M.S."/>
            <person name="Miyasato S.R."/>
            <person name="Simison M."/>
            <person name="Cherry J.M."/>
        </authorList>
    </citation>
    <scope>GENOME REANNOTATION</scope>
    <source>
        <strain>ATCC 204508 / S288c</strain>
    </source>
</reference>
<reference key="4">
    <citation type="journal article" date="2007" name="Genome Res.">
        <title>Approaching a complete repository of sequence-verified protein-encoding clones for Saccharomyces cerevisiae.</title>
        <authorList>
            <person name="Hu Y."/>
            <person name="Rolfs A."/>
            <person name="Bhullar B."/>
            <person name="Murthy T.V.S."/>
            <person name="Zhu C."/>
            <person name="Berger M.F."/>
            <person name="Camargo A.A."/>
            <person name="Kelley F."/>
            <person name="McCarron S."/>
            <person name="Jepson D."/>
            <person name="Richardson A."/>
            <person name="Raphael J."/>
            <person name="Moreira D."/>
            <person name="Taycher E."/>
            <person name="Zuo D."/>
            <person name="Mohr S."/>
            <person name="Kane M.F."/>
            <person name="Williamson J."/>
            <person name="Simpson A.J.G."/>
            <person name="Bulyk M.L."/>
            <person name="Harlow E."/>
            <person name="Marsischky G."/>
            <person name="Kolodner R.D."/>
            <person name="LaBaer J."/>
        </authorList>
    </citation>
    <scope>NUCLEOTIDE SEQUENCE [GENOMIC DNA]</scope>
    <source>
        <strain>ATCC 204508 / S288c</strain>
    </source>
</reference>
<dbReference type="EMBL" id="Z72625">
    <property type="protein sequence ID" value="CAA96809.1"/>
    <property type="molecule type" value="Genomic_DNA"/>
</dbReference>
<dbReference type="EMBL" id="AY693255">
    <property type="protein sequence ID" value="AAT93274.1"/>
    <property type="molecule type" value="Genomic_DNA"/>
</dbReference>
<dbReference type="PIR" id="S64109">
    <property type="entry name" value="S64109"/>
</dbReference>
<dbReference type="DIP" id="DIP-5479N"/>
<dbReference type="IntAct" id="P53143">
    <property type="interactions" value="1"/>
</dbReference>
<dbReference type="STRING" id="4932.YGL102C"/>
<dbReference type="PaxDb" id="4932-YGL102C"/>
<dbReference type="EnsemblFungi" id="YGL102C_mRNA">
    <property type="protein sequence ID" value="YGL102C"/>
    <property type="gene ID" value="YGL102C"/>
</dbReference>
<dbReference type="AGR" id="SGD:S000003070"/>
<dbReference type="SGD" id="S000003070">
    <property type="gene designation" value="YGL102C"/>
</dbReference>
<dbReference type="eggNOG" id="ENOG502SW5Y">
    <property type="taxonomic scope" value="Eukaryota"/>
</dbReference>
<dbReference type="HOGENOM" id="CLU_1817317_0_0_1"/>
<dbReference type="OMA" id="DWLPEMS"/>
<evidence type="ECO:0000305" key="1"/>
<evidence type="ECO:0000305" key="2">
    <source>
    </source>
</evidence>
<proteinExistence type="uncertain"/>